<protein>
    <recommendedName>
        <fullName evidence="1">Small ribosomal subunit biogenesis GTPase RsgA</fullName>
        <ecNumber evidence="1">3.6.1.-</ecNumber>
    </recommendedName>
</protein>
<reference key="1">
    <citation type="journal article" date="2005" name="Nucleic Acids Res.">
        <title>Genomic blueprint of Hahella chejuensis, a marine microbe producing an algicidal agent.</title>
        <authorList>
            <person name="Jeong H."/>
            <person name="Yim J.H."/>
            <person name="Lee C."/>
            <person name="Choi S.-H."/>
            <person name="Park Y.K."/>
            <person name="Yoon S.H."/>
            <person name="Hur C.-G."/>
            <person name="Kang H.-Y."/>
            <person name="Kim D."/>
            <person name="Lee H.H."/>
            <person name="Park K.H."/>
            <person name="Park S.-H."/>
            <person name="Park H.-S."/>
            <person name="Lee H.K."/>
            <person name="Oh T.K."/>
            <person name="Kim J.F."/>
        </authorList>
    </citation>
    <scope>NUCLEOTIDE SEQUENCE [LARGE SCALE GENOMIC DNA]</scope>
    <source>
        <strain>KCTC 2396</strain>
    </source>
</reference>
<accession>Q2SBB3</accession>
<dbReference type="EC" id="3.6.1.-" evidence="1"/>
<dbReference type="EMBL" id="CP000155">
    <property type="protein sequence ID" value="ABC32061.1"/>
    <property type="molecule type" value="Genomic_DNA"/>
</dbReference>
<dbReference type="RefSeq" id="WP_011399125.1">
    <property type="nucleotide sequence ID" value="NC_007645.1"/>
</dbReference>
<dbReference type="SMR" id="Q2SBB3"/>
<dbReference type="STRING" id="349521.HCH_05392"/>
<dbReference type="KEGG" id="hch:HCH_05392"/>
<dbReference type="eggNOG" id="COG1162">
    <property type="taxonomic scope" value="Bacteria"/>
</dbReference>
<dbReference type="HOGENOM" id="CLU_033617_2_0_6"/>
<dbReference type="OrthoDB" id="9809485at2"/>
<dbReference type="Proteomes" id="UP000000238">
    <property type="component" value="Chromosome"/>
</dbReference>
<dbReference type="GO" id="GO:0005737">
    <property type="term" value="C:cytoplasm"/>
    <property type="evidence" value="ECO:0007669"/>
    <property type="project" value="UniProtKB-SubCell"/>
</dbReference>
<dbReference type="GO" id="GO:0005525">
    <property type="term" value="F:GTP binding"/>
    <property type="evidence" value="ECO:0007669"/>
    <property type="project" value="UniProtKB-UniRule"/>
</dbReference>
<dbReference type="GO" id="GO:0003924">
    <property type="term" value="F:GTPase activity"/>
    <property type="evidence" value="ECO:0007669"/>
    <property type="project" value="UniProtKB-UniRule"/>
</dbReference>
<dbReference type="GO" id="GO:0046872">
    <property type="term" value="F:metal ion binding"/>
    <property type="evidence" value="ECO:0007669"/>
    <property type="project" value="UniProtKB-KW"/>
</dbReference>
<dbReference type="GO" id="GO:0019843">
    <property type="term" value="F:rRNA binding"/>
    <property type="evidence" value="ECO:0007669"/>
    <property type="project" value="UniProtKB-KW"/>
</dbReference>
<dbReference type="GO" id="GO:0042274">
    <property type="term" value="P:ribosomal small subunit biogenesis"/>
    <property type="evidence" value="ECO:0007669"/>
    <property type="project" value="UniProtKB-UniRule"/>
</dbReference>
<dbReference type="CDD" id="cd01854">
    <property type="entry name" value="YjeQ_EngC"/>
    <property type="match status" value="1"/>
</dbReference>
<dbReference type="Gene3D" id="2.40.50.140">
    <property type="entry name" value="Nucleic acid-binding proteins"/>
    <property type="match status" value="1"/>
</dbReference>
<dbReference type="Gene3D" id="3.40.50.300">
    <property type="entry name" value="P-loop containing nucleotide triphosphate hydrolases"/>
    <property type="match status" value="1"/>
</dbReference>
<dbReference type="Gene3D" id="1.10.40.50">
    <property type="entry name" value="Probable gtpase engc, domain 3"/>
    <property type="match status" value="1"/>
</dbReference>
<dbReference type="HAMAP" id="MF_01820">
    <property type="entry name" value="GTPase_RsgA"/>
    <property type="match status" value="1"/>
</dbReference>
<dbReference type="InterPro" id="IPR030378">
    <property type="entry name" value="G_CP_dom"/>
</dbReference>
<dbReference type="InterPro" id="IPR012340">
    <property type="entry name" value="NA-bd_OB-fold"/>
</dbReference>
<dbReference type="InterPro" id="IPR027417">
    <property type="entry name" value="P-loop_NTPase"/>
</dbReference>
<dbReference type="InterPro" id="IPR004881">
    <property type="entry name" value="Ribosome_biogen_GTPase_RsgA"/>
</dbReference>
<dbReference type="InterPro" id="IPR010914">
    <property type="entry name" value="RsgA_GTPase_dom"/>
</dbReference>
<dbReference type="NCBIfam" id="NF008931">
    <property type="entry name" value="PRK12288.1"/>
    <property type="match status" value="1"/>
</dbReference>
<dbReference type="NCBIfam" id="TIGR00157">
    <property type="entry name" value="ribosome small subunit-dependent GTPase A"/>
    <property type="match status" value="1"/>
</dbReference>
<dbReference type="PANTHER" id="PTHR32120">
    <property type="entry name" value="SMALL RIBOSOMAL SUBUNIT BIOGENESIS GTPASE RSGA"/>
    <property type="match status" value="1"/>
</dbReference>
<dbReference type="PANTHER" id="PTHR32120:SF11">
    <property type="entry name" value="SMALL RIBOSOMAL SUBUNIT BIOGENESIS GTPASE RSGA 1, MITOCHONDRIAL-RELATED"/>
    <property type="match status" value="1"/>
</dbReference>
<dbReference type="Pfam" id="PF03193">
    <property type="entry name" value="RsgA_GTPase"/>
    <property type="match status" value="1"/>
</dbReference>
<dbReference type="SUPFAM" id="SSF50249">
    <property type="entry name" value="Nucleic acid-binding proteins"/>
    <property type="match status" value="1"/>
</dbReference>
<dbReference type="SUPFAM" id="SSF52540">
    <property type="entry name" value="P-loop containing nucleoside triphosphate hydrolases"/>
    <property type="match status" value="1"/>
</dbReference>
<dbReference type="PROSITE" id="PS50936">
    <property type="entry name" value="ENGC_GTPASE"/>
    <property type="match status" value="1"/>
</dbReference>
<dbReference type="PROSITE" id="PS51721">
    <property type="entry name" value="G_CP"/>
    <property type="match status" value="1"/>
</dbReference>
<keyword id="KW-0963">Cytoplasm</keyword>
<keyword id="KW-0342">GTP-binding</keyword>
<keyword id="KW-0378">Hydrolase</keyword>
<keyword id="KW-0479">Metal-binding</keyword>
<keyword id="KW-0547">Nucleotide-binding</keyword>
<keyword id="KW-1185">Reference proteome</keyword>
<keyword id="KW-0690">Ribosome biogenesis</keyword>
<keyword id="KW-0694">RNA-binding</keyword>
<keyword id="KW-0699">rRNA-binding</keyword>
<keyword id="KW-0862">Zinc</keyword>
<evidence type="ECO:0000255" key="1">
    <source>
        <dbReference type="HAMAP-Rule" id="MF_01820"/>
    </source>
</evidence>
<evidence type="ECO:0000255" key="2">
    <source>
        <dbReference type="PROSITE-ProRule" id="PRU01058"/>
    </source>
</evidence>
<evidence type="ECO:0000256" key="3">
    <source>
        <dbReference type="SAM" id="MobiDB-lite"/>
    </source>
</evidence>
<sequence length="348" mass="39143">MAKRKLSKQQKWRIQKIQDERTKRATRKETQLESQLSGGELSAEQEGLIIAHYGQQLAVEALEPPHAGQIFRCYVRANIDSLVTGDLVIWRAGPDNSGVIVARQPRESALKRPDKFGQLKPIAANIDQILIVIAAEPEPHHNLVDRYLVASEAVGIPPLIILNKQDLINDANRDALQQFKDQYQQLGYEWIDASTNTQSGLDDLKQHLAHKTSIFVGQSGVGKSSLIKMLLPEEDVKVGDLSENVRKGTHTTTTAKLFHLPSGGDLIDSPGIREFGLWHIDEHTLEDGFVEFRPHLGHCRFRNCRHIQEPGCALQSAQESGEILTSRMESFLRIRESLQEQDIHEENL</sequence>
<feature type="chain" id="PRO_1000188087" description="Small ribosomal subunit biogenesis GTPase RsgA">
    <location>
        <begin position="1"/>
        <end position="348"/>
    </location>
</feature>
<feature type="domain" description="CP-type G" evidence="2">
    <location>
        <begin position="116"/>
        <end position="275"/>
    </location>
</feature>
<feature type="region of interest" description="Disordered" evidence="3">
    <location>
        <begin position="1"/>
        <end position="39"/>
    </location>
</feature>
<feature type="compositionally biased region" description="Basic residues" evidence="3">
    <location>
        <begin position="1"/>
        <end position="14"/>
    </location>
</feature>
<feature type="compositionally biased region" description="Basic and acidic residues" evidence="3">
    <location>
        <begin position="16"/>
        <end position="31"/>
    </location>
</feature>
<feature type="binding site" evidence="1">
    <location>
        <begin position="163"/>
        <end position="166"/>
    </location>
    <ligand>
        <name>GTP</name>
        <dbReference type="ChEBI" id="CHEBI:37565"/>
    </ligand>
</feature>
<feature type="binding site" evidence="1">
    <location>
        <begin position="217"/>
        <end position="225"/>
    </location>
    <ligand>
        <name>GTP</name>
        <dbReference type="ChEBI" id="CHEBI:37565"/>
    </ligand>
</feature>
<feature type="binding site" evidence="1">
    <location>
        <position position="299"/>
    </location>
    <ligand>
        <name>Zn(2+)</name>
        <dbReference type="ChEBI" id="CHEBI:29105"/>
    </ligand>
</feature>
<feature type="binding site" evidence="1">
    <location>
        <position position="304"/>
    </location>
    <ligand>
        <name>Zn(2+)</name>
        <dbReference type="ChEBI" id="CHEBI:29105"/>
    </ligand>
</feature>
<feature type="binding site" evidence="1">
    <location>
        <position position="306"/>
    </location>
    <ligand>
        <name>Zn(2+)</name>
        <dbReference type="ChEBI" id="CHEBI:29105"/>
    </ligand>
</feature>
<feature type="binding site" evidence="1">
    <location>
        <position position="312"/>
    </location>
    <ligand>
        <name>Zn(2+)</name>
        <dbReference type="ChEBI" id="CHEBI:29105"/>
    </ligand>
</feature>
<comment type="function">
    <text evidence="1">One of several proteins that assist in the late maturation steps of the functional core of the 30S ribosomal subunit. Helps release RbfA from mature subunits. May play a role in the assembly of ribosomal proteins into the subunit. Circularly permuted GTPase that catalyzes slow GTP hydrolysis, GTPase activity is stimulated by the 30S ribosomal subunit.</text>
</comment>
<comment type="cofactor">
    <cofactor evidence="1">
        <name>Zn(2+)</name>
        <dbReference type="ChEBI" id="CHEBI:29105"/>
    </cofactor>
    <text evidence="1">Binds 1 zinc ion per subunit.</text>
</comment>
<comment type="subunit">
    <text evidence="1">Monomer. Associates with 30S ribosomal subunit, binds 16S rRNA.</text>
</comment>
<comment type="subcellular location">
    <subcellularLocation>
        <location evidence="1">Cytoplasm</location>
    </subcellularLocation>
</comment>
<comment type="similarity">
    <text evidence="1">Belongs to the TRAFAC class YlqF/YawG GTPase family. RsgA subfamily.</text>
</comment>
<organism>
    <name type="scientific">Hahella chejuensis (strain KCTC 2396)</name>
    <dbReference type="NCBI Taxonomy" id="349521"/>
    <lineage>
        <taxon>Bacteria</taxon>
        <taxon>Pseudomonadati</taxon>
        <taxon>Pseudomonadota</taxon>
        <taxon>Gammaproteobacteria</taxon>
        <taxon>Oceanospirillales</taxon>
        <taxon>Hahellaceae</taxon>
        <taxon>Hahella</taxon>
    </lineage>
</organism>
<proteinExistence type="inferred from homology"/>
<gene>
    <name evidence="1" type="primary">rsgA</name>
    <name type="ordered locus">HCH_05392</name>
</gene>
<name>RSGA_HAHCH</name>